<proteinExistence type="inferred from homology"/>
<protein>
    <recommendedName>
        <fullName evidence="2">Elongation factor 1-alpha</fullName>
        <shortName evidence="2">EF-1-alpha</shortName>
        <ecNumber evidence="2">3.6.5.3</ecNumber>
    </recommendedName>
    <alternativeName>
        <fullName evidence="2">Elongation factor Tu</fullName>
        <shortName evidence="2">EF-Tu</shortName>
    </alternativeName>
</protein>
<feature type="chain" id="PRO_0000337604" description="Elongation factor 1-alpha">
    <location>
        <begin position="1"/>
        <end position="435"/>
    </location>
</feature>
<feature type="domain" description="tr-type G">
    <location>
        <begin position="4"/>
        <end position="229"/>
    </location>
</feature>
<feature type="region of interest" description="G1" evidence="1">
    <location>
        <begin position="13"/>
        <end position="20"/>
    </location>
</feature>
<feature type="region of interest" description="G2" evidence="1">
    <location>
        <begin position="69"/>
        <end position="73"/>
    </location>
</feature>
<feature type="region of interest" description="G3" evidence="1">
    <location>
        <begin position="90"/>
        <end position="93"/>
    </location>
</feature>
<feature type="region of interest" description="G4" evidence="1">
    <location>
        <begin position="152"/>
        <end position="155"/>
    </location>
</feature>
<feature type="region of interest" description="G5" evidence="1">
    <location>
        <begin position="193"/>
        <end position="195"/>
    </location>
</feature>
<feature type="binding site" evidence="2">
    <location>
        <begin position="13"/>
        <end position="20"/>
    </location>
    <ligand>
        <name>GTP</name>
        <dbReference type="ChEBI" id="CHEBI:37565"/>
    </ligand>
</feature>
<feature type="binding site" evidence="2">
    <location>
        <position position="20"/>
    </location>
    <ligand>
        <name>Mg(2+)</name>
        <dbReference type="ChEBI" id="CHEBI:18420"/>
    </ligand>
</feature>
<feature type="binding site" evidence="2">
    <location>
        <begin position="90"/>
        <end position="94"/>
    </location>
    <ligand>
        <name>GTP</name>
        <dbReference type="ChEBI" id="CHEBI:37565"/>
    </ligand>
</feature>
<feature type="binding site" evidence="2">
    <location>
        <begin position="152"/>
        <end position="155"/>
    </location>
    <ligand>
        <name>GTP</name>
        <dbReference type="ChEBI" id="CHEBI:37565"/>
    </ligand>
</feature>
<gene>
    <name evidence="2" type="primary">tuf</name>
    <name type="ordered locus">Msed_0041</name>
</gene>
<comment type="function">
    <text evidence="2">GTP hydrolase that promotes the GTP-dependent binding of aminoacyl-tRNA to the A-site of ribosomes during protein biosynthesis.</text>
</comment>
<comment type="catalytic activity">
    <reaction evidence="2">
        <text>GTP + H2O = GDP + phosphate + H(+)</text>
        <dbReference type="Rhea" id="RHEA:19669"/>
        <dbReference type="ChEBI" id="CHEBI:15377"/>
        <dbReference type="ChEBI" id="CHEBI:15378"/>
        <dbReference type="ChEBI" id="CHEBI:37565"/>
        <dbReference type="ChEBI" id="CHEBI:43474"/>
        <dbReference type="ChEBI" id="CHEBI:58189"/>
        <dbReference type="EC" id="3.6.5.3"/>
    </reaction>
    <physiologicalReaction direction="left-to-right" evidence="2">
        <dbReference type="Rhea" id="RHEA:19670"/>
    </physiologicalReaction>
</comment>
<comment type="subcellular location">
    <subcellularLocation>
        <location evidence="2">Cytoplasm</location>
    </subcellularLocation>
</comment>
<comment type="similarity">
    <text evidence="2">Belongs to the TRAFAC class translation factor GTPase superfamily. Classic translation factor GTPase family. EF-Tu/EF-1A subfamily.</text>
</comment>
<reference key="1">
    <citation type="journal article" date="2008" name="Appl. Environ. Microbiol.">
        <title>The genome sequence of the metal-mobilizing, extremely thermoacidophilic archaeon Metallosphaera sedula provides insights into bioleaching-associated metabolism.</title>
        <authorList>
            <person name="Auernik K.S."/>
            <person name="Maezato Y."/>
            <person name="Blum P.H."/>
            <person name="Kelly R.M."/>
        </authorList>
    </citation>
    <scope>NUCLEOTIDE SEQUENCE [LARGE SCALE GENOMIC DNA]</scope>
    <source>
        <strain>ATCC 51363 / DSM 5348 / JCM 9185 / NBRC 15509 / TH2</strain>
    </source>
</reference>
<dbReference type="EC" id="3.6.5.3" evidence="2"/>
<dbReference type="EMBL" id="CP000682">
    <property type="protein sequence ID" value="ABP94218.1"/>
    <property type="molecule type" value="Genomic_DNA"/>
</dbReference>
<dbReference type="RefSeq" id="WP_011921187.1">
    <property type="nucleotide sequence ID" value="NZ_CP139956.1"/>
</dbReference>
<dbReference type="SMR" id="A4YCR6"/>
<dbReference type="STRING" id="399549.Msed_0041"/>
<dbReference type="GeneID" id="97614950"/>
<dbReference type="KEGG" id="mse:Msed_0041"/>
<dbReference type="eggNOG" id="arCOG01561">
    <property type="taxonomic scope" value="Archaea"/>
</dbReference>
<dbReference type="HOGENOM" id="CLU_007265_3_5_2"/>
<dbReference type="Proteomes" id="UP000000242">
    <property type="component" value="Chromosome"/>
</dbReference>
<dbReference type="GO" id="GO:0005737">
    <property type="term" value="C:cytoplasm"/>
    <property type="evidence" value="ECO:0007669"/>
    <property type="project" value="UniProtKB-SubCell"/>
</dbReference>
<dbReference type="GO" id="GO:0005525">
    <property type="term" value="F:GTP binding"/>
    <property type="evidence" value="ECO:0007669"/>
    <property type="project" value="UniProtKB-UniRule"/>
</dbReference>
<dbReference type="GO" id="GO:0003924">
    <property type="term" value="F:GTPase activity"/>
    <property type="evidence" value="ECO:0007669"/>
    <property type="project" value="InterPro"/>
</dbReference>
<dbReference type="GO" id="GO:0003746">
    <property type="term" value="F:translation elongation factor activity"/>
    <property type="evidence" value="ECO:0007669"/>
    <property type="project" value="UniProtKB-UniRule"/>
</dbReference>
<dbReference type="CDD" id="cd01883">
    <property type="entry name" value="EF1_alpha"/>
    <property type="match status" value="1"/>
</dbReference>
<dbReference type="CDD" id="cd03693">
    <property type="entry name" value="EF1_alpha_II"/>
    <property type="match status" value="1"/>
</dbReference>
<dbReference type="CDD" id="cd03705">
    <property type="entry name" value="EF1_alpha_III"/>
    <property type="match status" value="1"/>
</dbReference>
<dbReference type="FunFam" id="2.40.30.10:FF:000003">
    <property type="entry name" value="Elongation factor 1-alpha"/>
    <property type="match status" value="1"/>
</dbReference>
<dbReference type="FunFam" id="2.40.30.10:FF:000005">
    <property type="entry name" value="Elongation factor 1-alpha"/>
    <property type="match status" value="1"/>
</dbReference>
<dbReference type="FunFam" id="3.40.50.300:FF:000255">
    <property type="entry name" value="Elongation factor 1-alpha"/>
    <property type="match status" value="1"/>
</dbReference>
<dbReference type="Gene3D" id="3.40.50.300">
    <property type="entry name" value="P-loop containing nucleotide triphosphate hydrolases"/>
    <property type="match status" value="1"/>
</dbReference>
<dbReference type="Gene3D" id="2.40.30.10">
    <property type="entry name" value="Translation factors"/>
    <property type="match status" value="2"/>
</dbReference>
<dbReference type="HAMAP" id="MF_00118_A">
    <property type="entry name" value="EF_Tu_A"/>
    <property type="match status" value="1"/>
</dbReference>
<dbReference type="InterPro" id="IPR004161">
    <property type="entry name" value="EFTu-like_2"/>
</dbReference>
<dbReference type="InterPro" id="IPR031157">
    <property type="entry name" value="G_TR_CS"/>
</dbReference>
<dbReference type="InterPro" id="IPR054696">
    <property type="entry name" value="GTP-eEF1A_C"/>
</dbReference>
<dbReference type="InterPro" id="IPR027417">
    <property type="entry name" value="P-loop_NTPase"/>
</dbReference>
<dbReference type="InterPro" id="IPR000795">
    <property type="entry name" value="T_Tr_GTP-bd_dom"/>
</dbReference>
<dbReference type="InterPro" id="IPR050100">
    <property type="entry name" value="TRAFAC_GTPase_members"/>
</dbReference>
<dbReference type="InterPro" id="IPR009000">
    <property type="entry name" value="Transl_B-barrel_sf"/>
</dbReference>
<dbReference type="InterPro" id="IPR009001">
    <property type="entry name" value="Transl_elong_EF1A/Init_IF2_C"/>
</dbReference>
<dbReference type="InterPro" id="IPR004539">
    <property type="entry name" value="Transl_elong_EF1A_euk/arc"/>
</dbReference>
<dbReference type="NCBIfam" id="TIGR00483">
    <property type="entry name" value="EF-1_alpha"/>
    <property type="match status" value="1"/>
</dbReference>
<dbReference type="NCBIfam" id="NF008969">
    <property type="entry name" value="PRK12317.1"/>
    <property type="match status" value="1"/>
</dbReference>
<dbReference type="PANTHER" id="PTHR23115">
    <property type="entry name" value="TRANSLATION FACTOR"/>
    <property type="match status" value="1"/>
</dbReference>
<dbReference type="Pfam" id="PF22594">
    <property type="entry name" value="GTP-eEF1A_C"/>
    <property type="match status" value="1"/>
</dbReference>
<dbReference type="Pfam" id="PF00009">
    <property type="entry name" value="GTP_EFTU"/>
    <property type="match status" value="1"/>
</dbReference>
<dbReference type="Pfam" id="PF03144">
    <property type="entry name" value="GTP_EFTU_D2"/>
    <property type="match status" value="1"/>
</dbReference>
<dbReference type="PRINTS" id="PR00315">
    <property type="entry name" value="ELONGATNFCT"/>
</dbReference>
<dbReference type="SUPFAM" id="SSF50465">
    <property type="entry name" value="EF-Tu/eEF-1alpha/eIF2-gamma C-terminal domain"/>
    <property type="match status" value="1"/>
</dbReference>
<dbReference type="SUPFAM" id="SSF52540">
    <property type="entry name" value="P-loop containing nucleoside triphosphate hydrolases"/>
    <property type="match status" value="1"/>
</dbReference>
<dbReference type="SUPFAM" id="SSF50447">
    <property type="entry name" value="Translation proteins"/>
    <property type="match status" value="1"/>
</dbReference>
<dbReference type="PROSITE" id="PS00301">
    <property type="entry name" value="G_TR_1"/>
    <property type="match status" value="1"/>
</dbReference>
<dbReference type="PROSITE" id="PS51722">
    <property type="entry name" value="G_TR_2"/>
    <property type="match status" value="1"/>
</dbReference>
<accession>A4YCR6</accession>
<sequence length="435" mass="48394">MSQKPHLNLIVIGHVDHGKSTLVGRLLMDRGFLDEKTIKEAEEAAKKLGKESEKYAFLLDRLKEERERGVTINLTFMRFETKKYFFTIIDAPGHRDFVKNMITGASQADAAILAVSARKGEFESGMSLEGQTREHIILAKTMGLNQVIVAITKMDVAEPPYDQKRYNEIKETIEKFMKSFGFDMSKVKFIPIVSITGENVTKRSENMKWYNGPTLEEALDMLEIPPKPVDKPLRLPIQEVYSISGVGTVPVGRVESGVMKVGDKIVFMPAGKSAEVRSIETHHTKLEKAEPGDNIGFNVRGIDKKDVKRGDVVGHTTNPPTVAEEFTARVIVVWHPTALAVGYTPVVHVHTASIACRVSEIVARLDPKTGKEAEKNPQFIKQGESAIVKFKPIKPLCVEKFSDFPPLGRFAMRDMGKTVGVGVINDVKPSKIEIK</sequence>
<organism>
    <name type="scientific">Metallosphaera sedula (strain ATCC 51363 / DSM 5348 / JCM 9185 / NBRC 15509 / TH2)</name>
    <dbReference type="NCBI Taxonomy" id="399549"/>
    <lineage>
        <taxon>Archaea</taxon>
        <taxon>Thermoproteota</taxon>
        <taxon>Thermoprotei</taxon>
        <taxon>Sulfolobales</taxon>
        <taxon>Sulfolobaceae</taxon>
        <taxon>Metallosphaera</taxon>
    </lineage>
</organism>
<name>EF1A_METS5</name>
<evidence type="ECO:0000250" key="1"/>
<evidence type="ECO:0000255" key="2">
    <source>
        <dbReference type="HAMAP-Rule" id="MF_00118"/>
    </source>
</evidence>
<keyword id="KW-0963">Cytoplasm</keyword>
<keyword id="KW-0251">Elongation factor</keyword>
<keyword id="KW-0342">GTP-binding</keyword>
<keyword id="KW-0378">Hydrolase</keyword>
<keyword id="KW-0460">Magnesium</keyword>
<keyword id="KW-0479">Metal-binding</keyword>
<keyword id="KW-0547">Nucleotide-binding</keyword>
<keyword id="KW-0648">Protein biosynthesis</keyword>
<keyword id="KW-1185">Reference proteome</keyword>